<feature type="initiator methionine" description="Removed" evidence="1">
    <location>
        <position position="1"/>
    </location>
</feature>
<feature type="chain" id="PRO_0000193637" description="Eukaryotic translation initiation factor 4E">
    <location>
        <begin position="2"/>
        <end position="217"/>
    </location>
</feature>
<feature type="region of interest" description="Disordered" evidence="3">
    <location>
        <begin position="1"/>
        <end position="27"/>
    </location>
</feature>
<feature type="region of interest" description="EIF4EBP1/2/3 binding" evidence="1">
    <location>
        <begin position="37"/>
        <end position="40"/>
    </location>
</feature>
<feature type="region of interest" description="EIF4EBP1/2/3 binding" evidence="1">
    <location>
        <begin position="73"/>
        <end position="77"/>
    </location>
</feature>
<feature type="region of interest" description="EIF4EBP1/2/3 binding" evidence="1">
    <location>
        <begin position="132"/>
        <end position="139"/>
    </location>
</feature>
<feature type="compositionally biased region" description="Low complexity" evidence="3">
    <location>
        <begin position="1"/>
        <end position="11"/>
    </location>
</feature>
<feature type="binding site" evidence="1">
    <location>
        <begin position="56"/>
        <end position="57"/>
    </location>
    <ligand>
        <name>mRNA</name>
        <dbReference type="ChEBI" id="CHEBI:33699"/>
    </ligand>
    <ligandPart>
        <name>N(7)-methylguanosine 5'-triphosphate group</name>
        <dbReference type="ChEBI" id="CHEBI:74429"/>
        <note>m7GTP residue in mRNA cap</note>
    </ligandPart>
</feature>
<feature type="binding site" evidence="1">
    <location>
        <begin position="102"/>
        <end position="103"/>
    </location>
    <ligand>
        <name>mRNA</name>
        <dbReference type="ChEBI" id="CHEBI:33699"/>
    </ligand>
    <ligandPart>
        <name>N(7)-methylguanosine 5'-triphosphate group</name>
        <dbReference type="ChEBI" id="CHEBI:74429"/>
        <note>m7GTP residue in mRNA cap</note>
    </ligandPart>
</feature>
<feature type="binding site" evidence="1">
    <location>
        <begin position="157"/>
        <end position="162"/>
    </location>
    <ligand>
        <name>mRNA</name>
        <dbReference type="ChEBI" id="CHEBI:33699"/>
    </ligand>
    <ligandPart>
        <name>N(7)-methylguanosine 5'-triphosphate group</name>
        <dbReference type="ChEBI" id="CHEBI:74429"/>
        <note>m7GTP residue in mRNA cap</note>
    </ligandPart>
</feature>
<feature type="binding site" evidence="1">
    <location>
        <begin position="205"/>
        <end position="207"/>
    </location>
    <ligand>
        <name>mRNA</name>
        <dbReference type="ChEBI" id="CHEBI:33699"/>
    </ligand>
    <ligandPart>
        <name>N(7)-methylguanosine 5'-triphosphate group</name>
        <dbReference type="ChEBI" id="CHEBI:74429"/>
        <note>m7GTP residue in mRNA cap</note>
    </ligandPart>
</feature>
<feature type="modified residue" description="N-acetylalanine" evidence="1">
    <location>
        <position position="2"/>
    </location>
</feature>
<feature type="modified residue" description="Phosphothreonine" evidence="1">
    <location>
        <position position="22"/>
    </location>
</feature>
<feature type="modified residue" description="Phosphoserine; by PKC and MKNK2" evidence="1">
    <location>
        <position position="209"/>
    </location>
</feature>
<name>IF4E_RAT</name>
<proteinExistence type="evidence at protein level"/>
<accession>P63074</accession>
<accession>P20415</accession>
<comment type="function">
    <text evidence="1 2 4 5">Acts in the cytoplasm to initiate and regulate protein synthesis and is required in the nucleus for export of a subset of mRNAs from the nucleus to the cytoplasm which promotes processes such as RNA capping, processing and splicing (By similarity). Component of the protein complex eIF4F, which is involved in the recognition of the mRNA cap, ATP-dependent unwinding of 5'-terminal secondary structure and recruitment of mRNA to the ribosome (By similarity). This protein recognizes and binds the 7-methylguanosine (m7G)-containing mRNA cap during an early step in the initiation of protein synthesis and facilitates ribosome binding by inducing the unwinding of the mRNAs secondary structures (PubMed:7939721). Together with EIF4G1, antagonizes the scanning promoted by EIF1-EIF4G1 and is required for TISU translation, a process where the TISU element recognition makes scanning unnecessary (By similarity). In addition to its role in translation initiation, also acts as a regulator of translation and stability in the cytoplasm (PubMed:8558852). Component of the CYFIP1-EIF4E-FMR1 complex which binds to the mRNA cap and mediates translational repression: in the complex, EIF4E mediates the binding to the mRNA cap. Component of a multiprotein complex that sequesters and represses translation of proneurogenic factors during neurogenesis (By similarity). In P-bodies, component of a complex that mediates the storage of translationally inactive mRNAs in the cytoplasm and prevents their degradation (By similarity). May play an important role in spermatogenesis through translational regulation of stage-specific mRNAs during germ cell development (PubMed:8558852). As well as its roles in translation, also involved in mRNA nucleocytoplasmic transport (By similarity). Its role in mRNA export from the nucleus to the cytoplasm relies on its ability to bind the m7G cap of RNAs and on the presence of the 50-nucleotide EIF4E sensitivity element (4ESE) in the 3'UTR of sensitive transcripts (By similarity). Interaction with the 4ESE is mediated by LRPPRC which binds simultaneously to both EIF4E and the 4ESE, thereby acting as a platform for assembly for the RNA export complex (By similarity). EIF4E-dependent mRNA export is independent of ongoing protein or RNA synthesis and is also NFX1-independent but is XPO1-dependent with LRPPRC interacting with XPO1 to form an EIF4E-dependent mRNA export complex (By similarity). Alters the composition of the cytoplasmic face of the nuclear pore to promote RNA export by reducing RANBP2 expression, relocalizing nucleoporin NUP214 and increasing expression of RANBP1 and RNA export factors DDX19 and GLE1. Promotes the nuclear export of cyclin CCND1 mRNA (By similarity). Promotes the nuclear export of NOS2/iNOS mRNA (By similarity). Promotes the nuclear export of MDM2 mRNA (By similarity). Also promotes the export of additional mRNAs, including others involved in the cell cycle (By similarity). In the nucleus, binds to capped splice factor-encoding mRNAs and stimulates their nuclear export to enhance splice factor production by increasing their cytoplasmic availability to the translation machinery (By similarity). May also regulate splicing through interaction with the spliceosome in an RNA and m7G cap-dependent manner (By similarity). Also binds to some pre-mRNAs and may play a role in their recruitment to the spliceosome (By similarity). Promotes steady-state capping of a subset of coding and non-coding RNAs by mediating nuclear export of capping machinery mRNAs including RNMT, RNGTT and RAMAC to enhance their translation (By similarity). Stimulates mRNA 3'-end processing by promoting the expression of several core cleavage complex factors required for mRNA cleavage and polyadenylation, and may also have a direct effect through its interaction with the CPSF3 cleavage enzyme (By similarity). Rescues cells from apoptosis by promoting activation of serine/threonine-protein kinase AKT1 through mRNA export of NBS1 which potentiates AKT1 phosphorylation and also through mRNA export of AKT1 effectors, allowing for increased production of these proteins (By similarity).</text>
</comment>
<comment type="subunit">
    <text evidence="1 2 4">eIF4F is a multi-subunit complex, the composition of which varies with external and internal environmental conditions (By similarity). It is composed of at least EIF4A, EIF4E and EIF4G1/EIF4G3. EIF4E is also known to interact with other partners (By similarity). Interacts with EIF4ENIF1/4E-T; promotes recruitment to P-bodies and import into the nucleus. Hypophosphorylated EIF4EBP1, EIF4EBP2 and EIF4EBP3 compete with EIF4G1/EIF4G3 to interact with EIF4E; insulin stimulated MAP-kinase (MAPK1 and MAPK3) phosphorylation of EIF4EBP1 causes dissociation of the complex allowing EIF4G1/EIF4G3 to bind and consequent initiation of translation. Interacts mutually exclusive with EIF4A1 or EIF4A2 (PubMed:7939721). Interacts with NGDN and PIWIL2. Component of the CYFIP1-EIF4E-FMR1 complex composed of CYFIP, EIF4E and FMR1. Interacts directly with CYFIP1. Interacts with CLOCK (By similarity). Binds to MKNK2 in nucleus. Interacts with LIMD1, WTIP and AJUBA. Interacts with APOBEC3G in an RNA-dependent manner. Interacts with LARP1. Interacts with METTL3. Interacts with RBM24; this interaction prevents EIF4E from binding to p53/TP53 mRNA and inhibits the assembly of translation initiation complex. Interacts with DDX3X; interaction is direct and in an RNA-independent manner; this interaction enhances EIF4E cap-binding ability and is required for the repression of cap-dependent translation and the increase of IRES-mediated translation. DDX3X competes with EIF4G1 for interaction with EIF4E (By similarity). Interacts with EIF4G1; which in a mutual exclusive interaction associates either with EIF1 or with EIF4E on a common binding site (By similarity). Interacts with BTG4 and CNOT7 (By similarity). Interacts with LRPPRC (via N-terminus); the interaction promotes association of EIF4E with 4ESE-containing mRNAs (By similarity). Interacts with mRNA cleavage enzyme CPSF3 and its cofactor CPSF1 (By similarity). Interacts (via RING-type zinc finger) with PML; the interaction results in conformational changes of both interacting proteins and reduces EIF4E affinity for the 5' m7G cap of mRNA, thus reducing EIF4E-mediated mRNA nuclear export (By similarity). Interacts with homeobox protein HHEX/PRH; the interaction inhibits EIF4E-mediated mRNA nuclear export (By similarity). Interacts with homeobox protein HOXA9; the interaction positively regulates EIF4E-mediated mRNA nuclear export (By similarity). Interacts with homeobox protein EMX2 (By similarity).</text>
</comment>
<comment type="subcellular location">
    <subcellularLocation>
        <location evidence="1">Cytoplasm</location>
        <location evidence="1">P-body</location>
    </subcellularLocation>
    <subcellularLocation>
        <location evidence="1">Cytoplasm</location>
    </subcellularLocation>
    <subcellularLocation>
        <location evidence="1">Cytoplasm</location>
        <location evidence="1">Stress granule</location>
    </subcellularLocation>
    <subcellularLocation>
        <location evidence="1">Nucleus</location>
    </subcellularLocation>
    <subcellularLocation>
        <location evidence="1">Nucleus speckle</location>
    </subcellularLocation>
    <subcellularLocation>
        <location evidence="2">Nucleus</location>
        <location evidence="2">Nuclear body</location>
    </subcellularLocation>
    <text evidence="1 2">Interaction with EIF4ENIF1/4E-T is required for localization to processing bodies (P-bodies). Imported in the nucleus via interaction with EIF4ENIF1/4E-T via a piggy-back mechanism (By similarity). Sequestered in the nucleus by EIF4EBP1 and EIF4EBP2 (By similarity).</text>
</comment>
<comment type="tissue specificity">
    <text evidence="5">Very high levels in post-meiotic testicular germ cells of rats of reproductive age.</text>
</comment>
<comment type="PTM">
    <text evidence="1 2 5">Phosphorylation increases the ability of the protein to bind to mRNA caps and to form the eIF4F complex (PubMed:8558852). Phosphorylation also enhances its mRNA transport function (By similarity). Phosphorylation at Ser-209 is not essential for protein synthesis (By similarity).</text>
</comment>
<comment type="similarity">
    <text evidence="6">Belongs to the eukaryotic initiation factor 4E family.</text>
</comment>
<keyword id="KW-0007">Acetylation</keyword>
<keyword id="KW-0963">Cytoplasm</keyword>
<keyword id="KW-0396">Initiation factor</keyword>
<keyword id="KW-0509">mRNA transport</keyword>
<keyword id="KW-0539">Nucleus</keyword>
<keyword id="KW-0597">Phosphoprotein</keyword>
<keyword id="KW-0648">Protein biosynthesis</keyword>
<keyword id="KW-1185">Reference proteome</keyword>
<keyword id="KW-0694">RNA-binding</keyword>
<keyword id="KW-0810">Translation regulation</keyword>
<keyword id="KW-0813">Transport</keyword>
<sequence>MATVEPETTPTTNPPPAEEEKTESNQEVANPEHYIKHPLQNRWALWFFKNDKSKTWQANLRLISKFDTVEDFWALYNHIQLSSNLMPGCDYSLFKDGIEPMWEDEKNKRGGRWLITLNKQQRRSDLDRFWLETLLCLIGESFDDYSDDVCGAVVNVRAKGDKIAIWTTECENRDAVTHIGRVYKERLGLPPKIVIGYQSHADTATKSGSTTKNRFVV</sequence>
<gene>
    <name type="primary">Eif4e</name>
</gene>
<reference key="1">
    <citation type="journal article" date="1995" name="Lab. Invest.">
        <title>Abundant expression of translation initiation factor EIF-4E in post-meiotic germ cells of the rat testis.</title>
        <authorList>
            <person name="Miyagi Y."/>
            <person name="Kerr S."/>
            <person name="Sugiyama A."/>
            <person name="Asai A."/>
            <person name="Shibuya M."/>
            <person name="Fujimoto H."/>
            <person name="Kuchino Y."/>
        </authorList>
    </citation>
    <scope>NUCLEOTIDE SEQUENCE [MRNA]</scope>
    <scope>FUNCTION</scope>
    <scope>PHOSPHORYLATION</scope>
    <scope>TISSUE SPECIFICITY</scope>
    <source>
        <tissue>Testis</tissue>
    </source>
</reference>
<reference key="2">
    <citation type="journal article" date="2004" name="Genome Res.">
        <title>The status, quality, and expansion of the NIH full-length cDNA project: the Mammalian Gene Collection (MGC).</title>
        <authorList>
            <consortium name="The MGC Project Team"/>
        </authorList>
    </citation>
    <scope>NUCLEOTIDE SEQUENCE [LARGE SCALE MRNA]</scope>
    <source>
        <tissue>Lung</tissue>
    </source>
</reference>
<reference key="3">
    <citation type="journal article" date="1994" name="Science">
        <title>PHAS-I as a link between mitogen-activated protein kinase and translation initiation.</title>
        <authorList>
            <person name="Lin T.-A."/>
            <person name="Kong X."/>
            <person name="Haystead T.A.J."/>
            <person name="Pause A."/>
            <person name="Belsham G.J."/>
            <person name="Sonenberg N."/>
            <person name="Lawrence J.C. Jr."/>
        </authorList>
    </citation>
    <scope>FUNCTION</scope>
    <scope>INTERACTION WITH EIF4EBP1</scope>
</reference>
<evidence type="ECO:0000250" key="1">
    <source>
        <dbReference type="UniProtKB" id="P06730"/>
    </source>
</evidence>
<evidence type="ECO:0000250" key="2">
    <source>
        <dbReference type="UniProtKB" id="P63073"/>
    </source>
</evidence>
<evidence type="ECO:0000256" key="3">
    <source>
        <dbReference type="SAM" id="MobiDB-lite"/>
    </source>
</evidence>
<evidence type="ECO:0000269" key="4">
    <source>
    </source>
</evidence>
<evidence type="ECO:0000269" key="5">
    <source>
    </source>
</evidence>
<evidence type="ECO:0000305" key="6"/>
<protein>
    <recommendedName>
        <fullName>Eukaryotic translation initiation factor 4E</fullName>
        <shortName>eIF-4E</shortName>
        <shortName>eIF4E</shortName>
    </recommendedName>
    <alternativeName>
        <fullName>eIF-4F 25 kDa subunit</fullName>
    </alternativeName>
    <alternativeName>
        <fullName>mRNA cap-binding protein</fullName>
    </alternativeName>
</protein>
<dbReference type="EMBL" id="X83399">
    <property type="protein sequence ID" value="CAA58316.1"/>
    <property type="molecule type" value="mRNA"/>
</dbReference>
<dbReference type="EMBL" id="BC087001">
    <property type="protein sequence ID" value="AAH87001.1"/>
    <property type="molecule type" value="mRNA"/>
</dbReference>
<dbReference type="RefSeq" id="NP_446426.1">
    <property type="nucleotide sequence ID" value="NM_053974.2"/>
</dbReference>
<dbReference type="RefSeq" id="XP_008759710.1">
    <property type="nucleotide sequence ID" value="XM_008761488.2"/>
</dbReference>
<dbReference type="RefSeq" id="XP_063137242.1">
    <property type="nucleotide sequence ID" value="XM_063281172.1"/>
</dbReference>
<dbReference type="BMRB" id="P63074"/>
<dbReference type="SMR" id="P63074"/>
<dbReference type="BioGRID" id="250643">
    <property type="interactions" value="4"/>
</dbReference>
<dbReference type="FunCoup" id="P63074">
    <property type="interactions" value="3823"/>
</dbReference>
<dbReference type="IntAct" id="P63074">
    <property type="interactions" value="1"/>
</dbReference>
<dbReference type="STRING" id="10116.ENSRNOP00000073799"/>
<dbReference type="iPTMnet" id="P63074"/>
<dbReference type="PhosphoSitePlus" id="P63074"/>
<dbReference type="jPOST" id="P63074"/>
<dbReference type="PaxDb" id="10116-ENSRNOP00000063699"/>
<dbReference type="Ensembl" id="ENSRNOT00000093355.2">
    <property type="protein sequence ID" value="ENSRNOP00000076114.2"/>
    <property type="gene ID" value="ENSRNOG00000052343.4"/>
</dbReference>
<dbReference type="GeneID" id="117045"/>
<dbReference type="KEGG" id="rno:117045"/>
<dbReference type="AGR" id="RGD:69647"/>
<dbReference type="CTD" id="1977"/>
<dbReference type="RGD" id="69647">
    <property type="gene designation" value="Eif4e"/>
</dbReference>
<dbReference type="eggNOG" id="KOG1670">
    <property type="taxonomic scope" value="Eukaryota"/>
</dbReference>
<dbReference type="GeneTree" id="ENSGT00940000154194"/>
<dbReference type="HOGENOM" id="CLU_043552_1_1_1"/>
<dbReference type="InParanoid" id="P63074"/>
<dbReference type="OrthoDB" id="590761at2759"/>
<dbReference type="PhylomeDB" id="P63074"/>
<dbReference type="Reactome" id="R-RNO-1169408">
    <property type="pathway name" value="ISG15 antiviral mechanism"/>
</dbReference>
<dbReference type="Reactome" id="R-RNO-156827">
    <property type="pathway name" value="L13a-mediated translational silencing of Ceruloplasmin expression"/>
</dbReference>
<dbReference type="Reactome" id="R-RNO-159227">
    <property type="pathway name" value="Transport of the SLBP independent Mature mRNA"/>
</dbReference>
<dbReference type="Reactome" id="R-RNO-159230">
    <property type="pathway name" value="Transport of the SLBP Dependant Mature mRNA"/>
</dbReference>
<dbReference type="Reactome" id="R-RNO-159231">
    <property type="pathway name" value="Transport of Mature mRNA Derived from an Intronless Transcript"/>
</dbReference>
<dbReference type="Reactome" id="R-RNO-166208">
    <property type="pathway name" value="mTORC1-mediated signalling"/>
</dbReference>
<dbReference type="Reactome" id="R-RNO-429947">
    <property type="pathway name" value="Deadenylation of mRNA"/>
</dbReference>
<dbReference type="Reactome" id="R-RNO-72649">
    <property type="pathway name" value="Translation initiation complex formation"/>
</dbReference>
<dbReference type="Reactome" id="R-RNO-72662">
    <property type="pathway name" value="Activation of the mRNA upon binding of the cap-binding complex and eIFs, and subsequent binding to 43S"/>
</dbReference>
<dbReference type="Reactome" id="R-RNO-72702">
    <property type="pathway name" value="Ribosomal scanning and start codon recognition"/>
</dbReference>
<dbReference type="CD-CODE" id="1E07FF65">
    <property type="entry name" value="Neuronal RNP granule"/>
</dbReference>
<dbReference type="CD-CODE" id="B2E8AD81">
    <property type="entry name" value="Stress granule"/>
</dbReference>
<dbReference type="PRO" id="PR:P63074"/>
<dbReference type="Proteomes" id="UP000002494">
    <property type="component" value="Chromosome 2"/>
</dbReference>
<dbReference type="Bgee" id="ENSRNOG00000052343">
    <property type="expression patterns" value="Expressed in testis and 20 other cell types or tissues"/>
</dbReference>
<dbReference type="ExpressionAtlas" id="P63074">
    <property type="expression patterns" value="baseline and differential"/>
</dbReference>
<dbReference type="GO" id="GO:0033391">
    <property type="term" value="C:chromatoid body"/>
    <property type="evidence" value="ECO:0000266"/>
    <property type="project" value="RGD"/>
</dbReference>
<dbReference type="GO" id="GO:0005737">
    <property type="term" value="C:cytoplasm"/>
    <property type="evidence" value="ECO:0000266"/>
    <property type="project" value="RGD"/>
</dbReference>
<dbReference type="GO" id="GO:0010494">
    <property type="term" value="C:cytoplasmic stress granule"/>
    <property type="evidence" value="ECO:0000250"/>
    <property type="project" value="UniProtKB"/>
</dbReference>
<dbReference type="GO" id="GO:0005829">
    <property type="term" value="C:cytosol"/>
    <property type="evidence" value="ECO:0000250"/>
    <property type="project" value="UniProtKB"/>
</dbReference>
<dbReference type="GO" id="GO:0016281">
    <property type="term" value="C:eukaryotic translation initiation factor 4F complex"/>
    <property type="evidence" value="ECO:0000314"/>
    <property type="project" value="RGD"/>
</dbReference>
<dbReference type="GO" id="GO:0098978">
    <property type="term" value="C:glutamatergic synapse"/>
    <property type="evidence" value="ECO:0000314"/>
    <property type="project" value="SynGO"/>
</dbReference>
<dbReference type="GO" id="GO:0016604">
    <property type="term" value="C:nuclear body"/>
    <property type="evidence" value="ECO:0000250"/>
    <property type="project" value="UniProtKB"/>
</dbReference>
<dbReference type="GO" id="GO:0016607">
    <property type="term" value="C:nuclear speck"/>
    <property type="evidence" value="ECO:0000250"/>
    <property type="project" value="UniProtKB"/>
</dbReference>
<dbReference type="GO" id="GO:0005634">
    <property type="term" value="C:nucleus"/>
    <property type="evidence" value="ECO:0000250"/>
    <property type="project" value="UniProtKB"/>
</dbReference>
<dbReference type="GO" id="GO:0000932">
    <property type="term" value="C:P-body"/>
    <property type="evidence" value="ECO:0000250"/>
    <property type="project" value="UniProtKB"/>
</dbReference>
<dbReference type="GO" id="GO:0048471">
    <property type="term" value="C:perinuclear region of cytoplasm"/>
    <property type="evidence" value="ECO:0000250"/>
    <property type="project" value="AgBase"/>
</dbReference>
<dbReference type="GO" id="GO:0098794">
    <property type="term" value="C:postsynapse"/>
    <property type="evidence" value="ECO:0000314"/>
    <property type="project" value="SynGO"/>
</dbReference>
<dbReference type="GO" id="GO:0099524">
    <property type="term" value="C:postsynaptic cytosol"/>
    <property type="evidence" value="ECO:0000314"/>
    <property type="project" value="SynGO"/>
</dbReference>
<dbReference type="GO" id="GO:0032991">
    <property type="term" value="C:protein-containing complex"/>
    <property type="evidence" value="ECO:0000314"/>
    <property type="project" value="RGD"/>
</dbReference>
<dbReference type="GO" id="GO:0016442">
    <property type="term" value="C:RISC complex"/>
    <property type="evidence" value="ECO:0000266"/>
    <property type="project" value="RGD"/>
</dbReference>
<dbReference type="GO" id="GO:0140297">
    <property type="term" value="F:DNA-binding transcription factor binding"/>
    <property type="evidence" value="ECO:0000250"/>
    <property type="project" value="AgBase"/>
</dbReference>
<dbReference type="GO" id="GO:0019899">
    <property type="term" value="F:enzyme binding"/>
    <property type="evidence" value="ECO:0000250"/>
    <property type="project" value="AgBase"/>
</dbReference>
<dbReference type="GO" id="GO:0031370">
    <property type="term" value="F:eukaryotic initiation factor 4G binding"/>
    <property type="evidence" value="ECO:0000353"/>
    <property type="project" value="RGD"/>
</dbReference>
<dbReference type="GO" id="GO:0098808">
    <property type="term" value="F:mRNA cap binding"/>
    <property type="evidence" value="ECO:0000250"/>
    <property type="project" value="UniProtKB"/>
</dbReference>
<dbReference type="GO" id="GO:0000340">
    <property type="term" value="F:RNA 7-methylguanosine cap binding"/>
    <property type="evidence" value="ECO:0000250"/>
    <property type="project" value="UniProtKB"/>
</dbReference>
<dbReference type="GO" id="GO:0003743">
    <property type="term" value="F:translation initiation factor activity"/>
    <property type="evidence" value="ECO:0000250"/>
    <property type="project" value="UniProtKB"/>
</dbReference>
<dbReference type="GO" id="GO:0001662">
    <property type="term" value="P:behavioral fear response"/>
    <property type="evidence" value="ECO:0000266"/>
    <property type="project" value="RGD"/>
</dbReference>
<dbReference type="GO" id="GO:0071549">
    <property type="term" value="P:cellular response to dexamethasone stimulus"/>
    <property type="evidence" value="ECO:0000266"/>
    <property type="project" value="RGD"/>
</dbReference>
<dbReference type="GO" id="GO:0000082">
    <property type="term" value="P:G1/S transition of mitotic cell cycle"/>
    <property type="evidence" value="ECO:0000266"/>
    <property type="project" value="RGD"/>
</dbReference>
<dbReference type="GO" id="GO:0030324">
    <property type="term" value="P:lung development"/>
    <property type="evidence" value="ECO:0000270"/>
    <property type="project" value="RGD"/>
</dbReference>
<dbReference type="GO" id="GO:0006406">
    <property type="term" value="P:mRNA export from nucleus"/>
    <property type="evidence" value="ECO:0000250"/>
    <property type="project" value="UniProtKB"/>
</dbReference>
<dbReference type="GO" id="GO:0045665">
    <property type="term" value="P:negative regulation of neuron differentiation"/>
    <property type="evidence" value="ECO:0000266"/>
    <property type="project" value="RGD"/>
</dbReference>
<dbReference type="GO" id="GO:0017148">
    <property type="term" value="P:negative regulation of translation"/>
    <property type="evidence" value="ECO:0000266"/>
    <property type="project" value="RGD"/>
</dbReference>
<dbReference type="GO" id="GO:0030182">
    <property type="term" value="P:neuron differentiation"/>
    <property type="evidence" value="ECO:0000266"/>
    <property type="project" value="RGD"/>
</dbReference>
<dbReference type="GO" id="GO:0051168">
    <property type="term" value="P:nuclear export"/>
    <property type="evidence" value="ECO:0000266"/>
    <property type="project" value="RGD"/>
</dbReference>
<dbReference type="GO" id="GO:0045931">
    <property type="term" value="P:positive regulation of mitotic cell cycle"/>
    <property type="evidence" value="ECO:0000266"/>
    <property type="project" value="RGD"/>
</dbReference>
<dbReference type="GO" id="GO:0006417">
    <property type="term" value="P:regulation of translation"/>
    <property type="evidence" value="ECO:0000250"/>
    <property type="project" value="UniProtKB"/>
</dbReference>
<dbReference type="GO" id="GO:0099578">
    <property type="term" value="P:regulation of translation at postsynapse, modulating synaptic transmission"/>
    <property type="evidence" value="ECO:0000266"/>
    <property type="project" value="RGD"/>
</dbReference>
<dbReference type="GO" id="GO:0019827">
    <property type="term" value="P:stem cell population maintenance"/>
    <property type="evidence" value="ECO:0000266"/>
    <property type="project" value="RGD"/>
</dbReference>
<dbReference type="GO" id="GO:0006412">
    <property type="term" value="P:translation"/>
    <property type="evidence" value="ECO:0000266"/>
    <property type="project" value="RGD"/>
</dbReference>
<dbReference type="GO" id="GO:0006413">
    <property type="term" value="P:translational initiation"/>
    <property type="evidence" value="ECO:0000250"/>
    <property type="project" value="UniProtKB"/>
</dbReference>
<dbReference type="FunFam" id="3.30.760.10:FF:000002">
    <property type="entry name" value="Eukaryotic translation initiation factor 4E"/>
    <property type="match status" value="1"/>
</dbReference>
<dbReference type="Gene3D" id="3.30.760.10">
    <property type="entry name" value="RNA Cap, Translation Initiation Factor Eif4e"/>
    <property type="match status" value="1"/>
</dbReference>
<dbReference type="InterPro" id="IPR023398">
    <property type="entry name" value="TIF_eIF4e-like"/>
</dbReference>
<dbReference type="InterPro" id="IPR001040">
    <property type="entry name" value="TIF_eIF_4E"/>
</dbReference>
<dbReference type="InterPro" id="IPR019770">
    <property type="entry name" value="TIF_eIF_4E_CS"/>
</dbReference>
<dbReference type="PANTHER" id="PTHR11960:SF14">
    <property type="entry name" value="EUKARYOTIC TRANSLATION INITIATION FACTOR 4E"/>
    <property type="match status" value="1"/>
</dbReference>
<dbReference type="PANTHER" id="PTHR11960">
    <property type="entry name" value="EUKARYOTIC TRANSLATION INITIATION FACTOR 4E RELATED"/>
    <property type="match status" value="1"/>
</dbReference>
<dbReference type="Pfam" id="PF01652">
    <property type="entry name" value="IF4E"/>
    <property type="match status" value="1"/>
</dbReference>
<dbReference type="SUPFAM" id="SSF55418">
    <property type="entry name" value="eIF4e-like"/>
    <property type="match status" value="1"/>
</dbReference>
<dbReference type="PROSITE" id="PS00813">
    <property type="entry name" value="IF4E"/>
    <property type="match status" value="1"/>
</dbReference>
<organism>
    <name type="scientific">Rattus norvegicus</name>
    <name type="common">Rat</name>
    <dbReference type="NCBI Taxonomy" id="10116"/>
    <lineage>
        <taxon>Eukaryota</taxon>
        <taxon>Metazoa</taxon>
        <taxon>Chordata</taxon>
        <taxon>Craniata</taxon>
        <taxon>Vertebrata</taxon>
        <taxon>Euteleostomi</taxon>
        <taxon>Mammalia</taxon>
        <taxon>Eutheria</taxon>
        <taxon>Euarchontoglires</taxon>
        <taxon>Glires</taxon>
        <taxon>Rodentia</taxon>
        <taxon>Myomorpha</taxon>
        <taxon>Muroidea</taxon>
        <taxon>Muridae</taxon>
        <taxon>Murinae</taxon>
        <taxon>Rattus</taxon>
    </lineage>
</organism>